<organism>
    <name type="scientific">Clostridium kluyveri (strain NBRC 12016)</name>
    <dbReference type="NCBI Taxonomy" id="583346"/>
    <lineage>
        <taxon>Bacteria</taxon>
        <taxon>Bacillati</taxon>
        <taxon>Bacillota</taxon>
        <taxon>Clostridia</taxon>
        <taxon>Eubacteriales</taxon>
        <taxon>Clostridiaceae</taxon>
        <taxon>Clostridium</taxon>
    </lineage>
</organism>
<gene>
    <name evidence="1" type="primary">dnaK</name>
    <name type="ordered locus">CKR_0815</name>
</gene>
<accession>B9E041</accession>
<comment type="function">
    <text evidence="1">Acts as a chaperone.</text>
</comment>
<comment type="induction">
    <text evidence="1">By stress conditions e.g. heat shock.</text>
</comment>
<comment type="similarity">
    <text evidence="1">Belongs to the heat shock protein 70 family.</text>
</comment>
<keyword id="KW-0067">ATP-binding</keyword>
<keyword id="KW-0143">Chaperone</keyword>
<keyword id="KW-0547">Nucleotide-binding</keyword>
<keyword id="KW-0597">Phosphoprotein</keyword>
<keyword id="KW-0346">Stress response</keyword>
<proteinExistence type="inferred from homology"/>
<name>DNAK_CLOK1</name>
<protein>
    <recommendedName>
        <fullName evidence="1">Chaperone protein DnaK</fullName>
    </recommendedName>
    <alternativeName>
        <fullName evidence="1">HSP70</fullName>
    </alternativeName>
    <alternativeName>
        <fullName evidence="1">Heat shock 70 kDa protein</fullName>
    </alternativeName>
    <alternativeName>
        <fullName evidence="1">Heat shock protein 70</fullName>
    </alternativeName>
</protein>
<reference key="1">
    <citation type="submission" date="2005-09" db="EMBL/GenBank/DDBJ databases">
        <title>Complete genome sequence of Clostridium kluyveri and comparative genomics of Clostridia species.</title>
        <authorList>
            <person name="Inui M."/>
            <person name="Nonaka H."/>
            <person name="Shinoda Y."/>
            <person name="Ikenaga Y."/>
            <person name="Abe M."/>
            <person name="Naito K."/>
            <person name="Vertes A.A."/>
            <person name="Yukawa H."/>
        </authorList>
    </citation>
    <scope>NUCLEOTIDE SEQUENCE [LARGE SCALE GENOMIC DNA]</scope>
    <source>
        <strain>NBRC 12016</strain>
    </source>
</reference>
<sequence>MSKVIGIDLGTTNSCVAVMEGGDPVVIANSEGARTTPSVVSFQANGERLVGQVAKRQSITNPDKTIISIKREMGTNHKVNIDGKQYTPQEISAMVLQKIKADAEAYLGETVTQAVITVPAYFNDSQRQATKDAGKIAGLEVLRIINEPTAAALAYGMDKMDTNQKIFVYDLGGGTFDVSILELGDGVFEVKATNGDTHLGGDDFDKKIIDYIADTFKADNGIDLKNDKMALQRLKEAAEKAKIELSSSTQTNINLPFITADATGPKHIDMSLTRAKFNELTQDLVDRTIEPMKKALNDAGLTINDINKVILVGGSTRIPAVQEAVKSFTGKEPSKGVNPDECVAMGAAIQAGVLTGDVKDVLLLDVTPLTLGIETLGGVATPLIERNTTIPTKKSQVFSTAADGQTSVEIHVVQGERQMAADNKTLGRFTLSGIAPAPRGVPQIEVTFDIDANGIVNVSAKDKGTGKEANITITASTNLSDDEIDKAVKEAEKFEEQDKKRKESIEIKNNADQVVYQTEKTLKDLGDKVSSEDKKAIEEKVEAVKKVKDGDDLEAIKKATEDLTQTFYGISSKIYSQNAEPGADGGANSGANPGGTTGNTDTKDDNVVDAEYKVDDDK</sequence>
<evidence type="ECO:0000255" key="1">
    <source>
        <dbReference type="HAMAP-Rule" id="MF_00332"/>
    </source>
</evidence>
<evidence type="ECO:0000256" key="2">
    <source>
        <dbReference type="SAM" id="MobiDB-lite"/>
    </source>
</evidence>
<feature type="chain" id="PRO_1000133140" description="Chaperone protein DnaK">
    <location>
        <begin position="1"/>
        <end position="618"/>
    </location>
</feature>
<feature type="region of interest" description="Disordered" evidence="2">
    <location>
        <begin position="576"/>
        <end position="618"/>
    </location>
</feature>
<feature type="compositionally biased region" description="Gly residues" evidence="2">
    <location>
        <begin position="583"/>
        <end position="597"/>
    </location>
</feature>
<feature type="compositionally biased region" description="Basic and acidic residues" evidence="2">
    <location>
        <begin position="601"/>
        <end position="618"/>
    </location>
</feature>
<feature type="modified residue" description="Phosphothreonine; by autocatalysis" evidence="1">
    <location>
        <position position="175"/>
    </location>
</feature>
<dbReference type="EMBL" id="AP009049">
    <property type="protein sequence ID" value="BAH05866.1"/>
    <property type="molecule type" value="Genomic_DNA"/>
</dbReference>
<dbReference type="RefSeq" id="WP_012101282.1">
    <property type="nucleotide sequence ID" value="NC_011837.1"/>
</dbReference>
<dbReference type="SMR" id="B9E041"/>
<dbReference type="KEGG" id="ckr:CKR_0815"/>
<dbReference type="HOGENOM" id="CLU_005965_3_0_9"/>
<dbReference type="Proteomes" id="UP000007969">
    <property type="component" value="Chromosome"/>
</dbReference>
<dbReference type="GO" id="GO:0005524">
    <property type="term" value="F:ATP binding"/>
    <property type="evidence" value="ECO:0007669"/>
    <property type="project" value="UniProtKB-UniRule"/>
</dbReference>
<dbReference type="GO" id="GO:0140662">
    <property type="term" value="F:ATP-dependent protein folding chaperone"/>
    <property type="evidence" value="ECO:0007669"/>
    <property type="project" value="InterPro"/>
</dbReference>
<dbReference type="GO" id="GO:0051082">
    <property type="term" value="F:unfolded protein binding"/>
    <property type="evidence" value="ECO:0007669"/>
    <property type="project" value="InterPro"/>
</dbReference>
<dbReference type="CDD" id="cd10234">
    <property type="entry name" value="ASKHA_NBD_HSP70_DnaK-like"/>
    <property type="match status" value="1"/>
</dbReference>
<dbReference type="FunFam" id="2.60.34.10:FF:000014">
    <property type="entry name" value="Chaperone protein DnaK HSP70"/>
    <property type="match status" value="1"/>
</dbReference>
<dbReference type="FunFam" id="1.20.1270.10:FF:000001">
    <property type="entry name" value="Molecular chaperone DnaK"/>
    <property type="match status" value="1"/>
</dbReference>
<dbReference type="FunFam" id="3.30.420.40:FF:000071">
    <property type="entry name" value="Molecular chaperone DnaK"/>
    <property type="match status" value="1"/>
</dbReference>
<dbReference type="FunFam" id="3.90.640.10:FF:000003">
    <property type="entry name" value="Molecular chaperone DnaK"/>
    <property type="match status" value="1"/>
</dbReference>
<dbReference type="Gene3D" id="1.20.1270.10">
    <property type="match status" value="1"/>
</dbReference>
<dbReference type="Gene3D" id="3.30.420.40">
    <property type="match status" value="2"/>
</dbReference>
<dbReference type="Gene3D" id="3.90.640.10">
    <property type="entry name" value="Actin, Chain A, domain 4"/>
    <property type="match status" value="1"/>
</dbReference>
<dbReference type="Gene3D" id="2.60.34.10">
    <property type="entry name" value="Substrate Binding Domain Of DNAk, Chain A, domain 1"/>
    <property type="match status" value="1"/>
</dbReference>
<dbReference type="HAMAP" id="MF_00332">
    <property type="entry name" value="DnaK"/>
    <property type="match status" value="1"/>
</dbReference>
<dbReference type="InterPro" id="IPR043129">
    <property type="entry name" value="ATPase_NBD"/>
</dbReference>
<dbReference type="InterPro" id="IPR012725">
    <property type="entry name" value="Chaperone_DnaK"/>
</dbReference>
<dbReference type="InterPro" id="IPR018181">
    <property type="entry name" value="Heat_shock_70_CS"/>
</dbReference>
<dbReference type="InterPro" id="IPR029048">
    <property type="entry name" value="HSP70_C_sf"/>
</dbReference>
<dbReference type="InterPro" id="IPR029047">
    <property type="entry name" value="HSP70_peptide-bd_sf"/>
</dbReference>
<dbReference type="InterPro" id="IPR013126">
    <property type="entry name" value="Hsp_70_fam"/>
</dbReference>
<dbReference type="NCBIfam" id="NF001413">
    <property type="entry name" value="PRK00290.1"/>
    <property type="match status" value="1"/>
</dbReference>
<dbReference type="NCBIfam" id="TIGR02350">
    <property type="entry name" value="prok_dnaK"/>
    <property type="match status" value="1"/>
</dbReference>
<dbReference type="PANTHER" id="PTHR19375">
    <property type="entry name" value="HEAT SHOCK PROTEIN 70KDA"/>
    <property type="match status" value="1"/>
</dbReference>
<dbReference type="Pfam" id="PF00012">
    <property type="entry name" value="HSP70"/>
    <property type="match status" value="1"/>
</dbReference>
<dbReference type="PRINTS" id="PR00301">
    <property type="entry name" value="HEATSHOCK70"/>
</dbReference>
<dbReference type="SUPFAM" id="SSF53067">
    <property type="entry name" value="Actin-like ATPase domain"/>
    <property type="match status" value="2"/>
</dbReference>
<dbReference type="SUPFAM" id="SSF100934">
    <property type="entry name" value="Heat shock protein 70kD (HSP70), C-terminal subdomain"/>
    <property type="match status" value="1"/>
</dbReference>
<dbReference type="SUPFAM" id="SSF100920">
    <property type="entry name" value="Heat shock protein 70kD (HSP70), peptide-binding domain"/>
    <property type="match status" value="1"/>
</dbReference>
<dbReference type="PROSITE" id="PS00297">
    <property type="entry name" value="HSP70_1"/>
    <property type="match status" value="1"/>
</dbReference>
<dbReference type="PROSITE" id="PS00329">
    <property type="entry name" value="HSP70_2"/>
    <property type="match status" value="1"/>
</dbReference>
<dbReference type="PROSITE" id="PS01036">
    <property type="entry name" value="HSP70_3"/>
    <property type="match status" value="1"/>
</dbReference>